<dbReference type="EC" id="5.6.2.1" evidence="1"/>
<dbReference type="EMBL" id="AE015929">
    <property type="protein sequence ID" value="AAO05469.1"/>
    <property type="molecule type" value="Genomic_DNA"/>
</dbReference>
<dbReference type="RefSeq" id="NP_765383.1">
    <property type="nucleotide sequence ID" value="NC_004461.1"/>
</dbReference>
<dbReference type="RefSeq" id="WP_001829767.1">
    <property type="nucleotide sequence ID" value="NZ_WBME01000007.1"/>
</dbReference>
<dbReference type="SMR" id="Q8CRF7"/>
<dbReference type="KEGG" id="sep:SE_1828"/>
<dbReference type="PATRIC" id="fig|176280.10.peg.1784"/>
<dbReference type="eggNOG" id="COG0550">
    <property type="taxonomic scope" value="Bacteria"/>
</dbReference>
<dbReference type="eggNOG" id="COG0551">
    <property type="taxonomic scope" value="Bacteria"/>
</dbReference>
<dbReference type="HOGENOM" id="CLU_002929_5_2_9"/>
<dbReference type="OrthoDB" id="9803554at2"/>
<dbReference type="Proteomes" id="UP000001411">
    <property type="component" value="Chromosome"/>
</dbReference>
<dbReference type="GO" id="GO:0043597">
    <property type="term" value="C:cytoplasmic replication fork"/>
    <property type="evidence" value="ECO:0007669"/>
    <property type="project" value="TreeGrafter"/>
</dbReference>
<dbReference type="GO" id="GO:0003677">
    <property type="term" value="F:DNA binding"/>
    <property type="evidence" value="ECO:0007669"/>
    <property type="project" value="UniProtKB-KW"/>
</dbReference>
<dbReference type="GO" id="GO:0003917">
    <property type="term" value="F:DNA topoisomerase type I (single strand cut, ATP-independent) activity"/>
    <property type="evidence" value="ECO:0007669"/>
    <property type="project" value="UniProtKB-UniRule"/>
</dbReference>
<dbReference type="GO" id="GO:0000287">
    <property type="term" value="F:magnesium ion binding"/>
    <property type="evidence" value="ECO:0007669"/>
    <property type="project" value="UniProtKB-UniRule"/>
</dbReference>
<dbReference type="GO" id="GO:0006310">
    <property type="term" value="P:DNA recombination"/>
    <property type="evidence" value="ECO:0007669"/>
    <property type="project" value="TreeGrafter"/>
</dbReference>
<dbReference type="GO" id="GO:0006281">
    <property type="term" value="P:DNA repair"/>
    <property type="evidence" value="ECO:0007669"/>
    <property type="project" value="TreeGrafter"/>
</dbReference>
<dbReference type="GO" id="GO:0006265">
    <property type="term" value="P:DNA topological change"/>
    <property type="evidence" value="ECO:0007669"/>
    <property type="project" value="UniProtKB-UniRule"/>
</dbReference>
<dbReference type="CDD" id="cd00186">
    <property type="entry name" value="TOP1Ac"/>
    <property type="match status" value="1"/>
</dbReference>
<dbReference type="CDD" id="cd03362">
    <property type="entry name" value="TOPRIM_TopoIA_TopoIII"/>
    <property type="match status" value="1"/>
</dbReference>
<dbReference type="Gene3D" id="3.40.50.140">
    <property type="match status" value="1"/>
</dbReference>
<dbReference type="Gene3D" id="1.10.460.10">
    <property type="entry name" value="Topoisomerase I, domain 2"/>
    <property type="match status" value="1"/>
</dbReference>
<dbReference type="Gene3D" id="2.70.20.10">
    <property type="entry name" value="Topoisomerase I, domain 3"/>
    <property type="match status" value="1"/>
</dbReference>
<dbReference type="Gene3D" id="1.10.290.10">
    <property type="entry name" value="Topoisomerase I, domain 4"/>
    <property type="match status" value="1"/>
</dbReference>
<dbReference type="HAMAP" id="MF_00953">
    <property type="entry name" value="Topoisom_3_prok"/>
    <property type="match status" value="1"/>
</dbReference>
<dbReference type="InterPro" id="IPR000380">
    <property type="entry name" value="Topo_IA"/>
</dbReference>
<dbReference type="InterPro" id="IPR003601">
    <property type="entry name" value="Topo_IA_2"/>
</dbReference>
<dbReference type="InterPro" id="IPR023406">
    <property type="entry name" value="Topo_IA_AS"/>
</dbReference>
<dbReference type="InterPro" id="IPR013497">
    <property type="entry name" value="Topo_IA_cen"/>
</dbReference>
<dbReference type="InterPro" id="IPR013824">
    <property type="entry name" value="Topo_IA_cen_sub1"/>
</dbReference>
<dbReference type="InterPro" id="IPR013825">
    <property type="entry name" value="Topo_IA_cen_sub2"/>
</dbReference>
<dbReference type="InterPro" id="IPR013826">
    <property type="entry name" value="Topo_IA_cen_sub3"/>
</dbReference>
<dbReference type="InterPro" id="IPR023405">
    <property type="entry name" value="Topo_IA_core_domain"/>
</dbReference>
<dbReference type="InterPro" id="IPR003602">
    <property type="entry name" value="Topo_IA_DNA-bd_dom"/>
</dbReference>
<dbReference type="InterPro" id="IPR005738">
    <property type="entry name" value="TopoIII"/>
</dbReference>
<dbReference type="InterPro" id="IPR006171">
    <property type="entry name" value="TOPRIM_dom"/>
</dbReference>
<dbReference type="InterPro" id="IPR034144">
    <property type="entry name" value="TOPRIM_TopoIII"/>
</dbReference>
<dbReference type="NCBIfam" id="NF005829">
    <property type="entry name" value="PRK07726.1"/>
    <property type="match status" value="1"/>
</dbReference>
<dbReference type="NCBIfam" id="TIGR01056">
    <property type="entry name" value="topB"/>
    <property type="match status" value="1"/>
</dbReference>
<dbReference type="PANTHER" id="PTHR11390:SF21">
    <property type="entry name" value="DNA TOPOISOMERASE 3-ALPHA"/>
    <property type="match status" value="1"/>
</dbReference>
<dbReference type="PANTHER" id="PTHR11390">
    <property type="entry name" value="PROKARYOTIC DNA TOPOISOMERASE"/>
    <property type="match status" value="1"/>
</dbReference>
<dbReference type="Pfam" id="PF01131">
    <property type="entry name" value="Topoisom_bac"/>
    <property type="match status" value="1"/>
</dbReference>
<dbReference type="Pfam" id="PF01751">
    <property type="entry name" value="Toprim"/>
    <property type="match status" value="1"/>
</dbReference>
<dbReference type="PRINTS" id="PR00417">
    <property type="entry name" value="PRTPISMRASEI"/>
</dbReference>
<dbReference type="SMART" id="SM00437">
    <property type="entry name" value="TOP1Ac"/>
    <property type="match status" value="1"/>
</dbReference>
<dbReference type="SMART" id="SM00436">
    <property type="entry name" value="TOP1Bc"/>
    <property type="match status" value="1"/>
</dbReference>
<dbReference type="SMART" id="SM00493">
    <property type="entry name" value="TOPRIM"/>
    <property type="match status" value="1"/>
</dbReference>
<dbReference type="SUPFAM" id="SSF56712">
    <property type="entry name" value="Prokaryotic type I DNA topoisomerase"/>
    <property type="match status" value="1"/>
</dbReference>
<dbReference type="PROSITE" id="PS00396">
    <property type="entry name" value="TOPO_IA_1"/>
    <property type="match status" value="1"/>
</dbReference>
<dbReference type="PROSITE" id="PS52039">
    <property type="entry name" value="TOPO_IA_2"/>
    <property type="match status" value="1"/>
</dbReference>
<dbReference type="PROSITE" id="PS50880">
    <property type="entry name" value="TOPRIM"/>
    <property type="match status" value="1"/>
</dbReference>
<protein>
    <recommendedName>
        <fullName evidence="1">DNA topoisomerase 3</fullName>
        <ecNumber evidence="1">5.6.2.1</ecNumber>
    </recommendedName>
    <alternativeName>
        <fullName evidence="1">DNA topoisomerase III</fullName>
    </alternativeName>
</protein>
<sequence length="711" mass="82363">MKSLILAEKPSVGRDIANALNLQQKSNGYIEGKQYIVTWALGHLVTNATPEQYNPSYKEWNLEDLPIIPKKMKTVVISKTNRQFKIVKSLILDKNVKEIIIATDAGREGELVARLILDKVGNKKPIKRLWISSVTKKAIQEGFKQLKNGNAYQNLYEAALARSEADWIVGINATRALTTKYDAQLSLGRVQTPTIQIVKSRQDEINYFKPEKYYTLSINVDGYDLNLKQQKRYKDKKELELIEHKIKHQEGKILEVKGKNKKSYAQPLFNLTDLQQEAYKRYKMGPKETLNTLQHLYERHKLVTYPRTDSNYLTDDMVDTIQERLRAILATDYKSHVRDLISESFSSKMHIFNNQKVSDHHAIIPTEVRPSIEQLSQREFKIYMLIAERFLENLMNPYLYEVLTIHAQLKDYNFVLKEIIPKQLGYKALKDQTSSHTLTHSFKEGQLFKVHRIEIHEHETKAPEYFNEGSLLKAMENPQNHIDLNDKKYAKTLKHSGGIGTVATRADIIEKLFNMNALESRDGKIKVTSKGKQILELSPSELTSPILTAQWEEKLMLIEKGKYNSQKFIQEMKNFTFKVVNKIKSSEQKYKHDNLTTTECPTCGKFMIKVKTKNGQMLVCQDPKCKTKKNIQRKTNARCPNCKKKMTLFGKGKEAVYRCVCGHTETQSQMDKRMRDKTNGKVSRKEMKKYINKKEEIDNNPFKDALKNLKL</sequence>
<organism>
    <name type="scientific">Staphylococcus epidermidis (strain ATCC 12228 / FDA PCI 1200)</name>
    <dbReference type="NCBI Taxonomy" id="176280"/>
    <lineage>
        <taxon>Bacteria</taxon>
        <taxon>Bacillati</taxon>
        <taxon>Bacillota</taxon>
        <taxon>Bacilli</taxon>
        <taxon>Bacillales</taxon>
        <taxon>Staphylococcaceae</taxon>
        <taxon>Staphylococcus</taxon>
    </lineage>
</organism>
<feature type="chain" id="PRO_0000286377" description="DNA topoisomerase 3">
    <location>
        <begin position="1"/>
        <end position="711"/>
    </location>
</feature>
<feature type="domain" description="Toprim" evidence="1">
    <location>
        <begin position="2"/>
        <end position="135"/>
    </location>
</feature>
<feature type="domain" description="Topo IA-type catalytic" evidence="2">
    <location>
        <begin position="152"/>
        <end position="580"/>
    </location>
</feature>
<feature type="region of interest" description="Interaction with DNA" evidence="1">
    <location>
        <begin position="186"/>
        <end position="191"/>
    </location>
</feature>
<feature type="active site" description="O-(5'-phospho-DNA)-tyrosine intermediate" evidence="2">
    <location>
        <position position="305"/>
    </location>
</feature>
<feature type="binding site" evidence="1">
    <location>
        <position position="8"/>
    </location>
    <ligand>
        <name>Mg(2+)</name>
        <dbReference type="ChEBI" id="CHEBI:18420"/>
        <note>catalytic</note>
    </ligand>
</feature>
<feature type="binding site" evidence="1">
    <location>
        <position position="104"/>
    </location>
    <ligand>
        <name>Mg(2+)</name>
        <dbReference type="ChEBI" id="CHEBI:18420"/>
        <note>catalytic</note>
    </ligand>
</feature>
<feature type="site" description="Interaction with DNA" evidence="1">
    <location>
        <position position="60"/>
    </location>
</feature>
<feature type="site" description="Interaction with DNA" evidence="1">
    <location>
        <position position="167"/>
    </location>
</feature>
<feature type="site" description="Interaction with DNA" evidence="1">
    <location>
        <position position="175"/>
    </location>
</feature>
<feature type="site" description="Interaction with DNA" evidence="1">
    <location>
        <position position="307"/>
    </location>
</feature>
<comment type="function">
    <text evidence="1">Releases the supercoiling and torsional tension of DNA, which is introduced during the DNA replication and transcription, by transiently cleaving and rejoining one strand of the DNA duplex. Introduces a single-strand break via transesterification at a target site in duplex DNA. The scissile phosphodiester is attacked by the catalytic tyrosine of the enzyme, resulting in the formation of a DNA-(5'-phosphotyrosyl)-enzyme intermediate and the expulsion of a 3'-OH DNA strand. The free DNA strand then undergoes passage around the unbroken strand, thus removing DNA supercoils. Finally, in the religation step, the DNA 3'-OH attacks the covalent intermediate to expel the active-site tyrosine and restore the DNA phosphodiester backbone.</text>
</comment>
<comment type="catalytic activity">
    <reaction evidence="1">
        <text>ATP-independent breakage of single-stranded DNA, followed by passage and rejoining.</text>
        <dbReference type="EC" id="5.6.2.1"/>
    </reaction>
</comment>
<comment type="cofactor">
    <cofactor evidence="1">
        <name>Mg(2+)</name>
        <dbReference type="ChEBI" id="CHEBI:18420"/>
    </cofactor>
</comment>
<comment type="similarity">
    <text evidence="1 2">Belongs to the type IA topoisomerase family.</text>
</comment>
<gene>
    <name evidence="1" type="primary">topB</name>
    <name type="ordered locus">SE_1828</name>
</gene>
<proteinExistence type="inferred from homology"/>
<keyword id="KW-0238">DNA-binding</keyword>
<keyword id="KW-0413">Isomerase</keyword>
<keyword id="KW-0460">Magnesium</keyword>
<keyword id="KW-0479">Metal-binding</keyword>
<keyword id="KW-0799">Topoisomerase</keyword>
<accession>Q8CRF7</accession>
<name>TOP3_STAES</name>
<evidence type="ECO:0000255" key="1">
    <source>
        <dbReference type="HAMAP-Rule" id="MF_00953"/>
    </source>
</evidence>
<evidence type="ECO:0000255" key="2">
    <source>
        <dbReference type="PROSITE-ProRule" id="PRU01383"/>
    </source>
</evidence>
<reference key="1">
    <citation type="journal article" date="2003" name="Mol. Microbiol.">
        <title>Genome-based analysis of virulence genes in a non-biofilm-forming Staphylococcus epidermidis strain (ATCC 12228).</title>
        <authorList>
            <person name="Zhang Y.-Q."/>
            <person name="Ren S.-X."/>
            <person name="Li H.-L."/>
            <person name="Wang Y.-X."/>
            <person name="Fu G."/>
            <person name="Yang J."/>
            <person name="Qin Z.-Q."/>
            <person name="Miao Y.-G."/>
            <person name="Wang W.-Y."/>
            <person name="Chen R.-S."/>
            <person name="Shen Y."/>
            <person name="Chen Z."/>
            <person name="Yuan Z.-H."/>
            <person name="Zhao G.-P."/>
            <person name="Qu D."/>
            <person name="Danchin A."/>
            <person name="Wen Y.-M."/>
        </authorList>
    </citation>
    <scope>NUCLEOTIDE SEQUENCE [LARGE SCALE GENOMIC DNA]</scope>
    <source>
        <strain>ATCC 12228 / FDA PCI 1200</strain>
    </source>
</reference>